<name>PURNU_STAES</name>
<protein>
    <recommendedName>
        <fullName>Purine nucleoside phosphorylase SE_0862</fullName>
        <ecNumber evidence="2">2.4.2.1</ecNumber>
    </recommendedName>
    <alternativeName>
        <fullName>Adenosine deaminase SE_0862</fullName>
        <ecNumber evidence="2">3.5.4.4</ecNumber>
    </alternativeName>
    <alternativeName>
        <fullName>S-methyl-5'-thioadenosine phosphorylase SE_0862</fullName>
        <ecNumber evidence="2">2.4.2.28</ecNumber>
    </alternativeName>
</protein>
<reference key="1">
    <citation type="journal article" date="2003" name="Mol. Microbiol.">
        <title>Genome-based analysis of virulence genes in a non-biofilm-forming Staphylococcus epidermidis strain (ATCC 12228).</title>
        <authorList>
            <person name="Zhang Y.-Q."/>
            <person name="Ren S.-X."/>
            <person name="Li H.-L."/>
            <person name="Wang Y.-X."/>
            <person name="Fu G."/>
            <person name="Yang J."/>
            <person name="Qin Z.-Q."/>
            <person name="Miao Y.-G."/>
            <person name="Wang W.-Y."/>
            <person name="Chen R.-S."/>
            <person name="Shen Y."/>
            <person name="Chen Z."/>
            <person name="Yuan Z.-H."/>
            <person name="Zhao G.-P."/>
            <person name="Qu D."/>
            <person name="Danchin A."/>
            <person name="Wen Y.-M."/>
        </authorList>
    </citation>
    <scope>NUCLEOTIDE SEQUENCE [LARGE SCALE GENOMIC DNA]</scope>
    <source>
        <strain>ATCC 12228 / FDA PCI 1200</strain>
    </source>
</reference>
<keyword id="KW-0186">Copper</keyword>
<keyword id="KW-0378">Hydrolase</keyword>
<keyword id="KW-0479">Metal-binding</keyword>
<keyword id="KW-0560">Oxidoreductase</keyword>
<keyword id="KW-0808">Transferase</keyword>
<keyword id="KW-0862">Zinc</keyword>
<comment type="function">
    <text evidence="2">Purine nucleoside enzyme that catalyzes the phosphorolysis of adenosine and inosine nucleosides, yielding D-ribose 1-phosphate and the respective free bases, adenine and hypoxanthine. Also catalyzes the phosphorolysis of S-methyl-5'-thioadenosine into adenine and S-methyl-5-thio-alpha-D-ribose 1-phosphate. Also has adenosine deaminase activity.</text>
</comment>
<comment type="catalytic activity">
    <reaction evidence="2">
        <text>adenosine + phosphate = alpha-D-ribose 1-phosphate + adenine</text>
        <dbReference type="Rhea" id="RHEA:27642"/>
        <dbReference type="ChEBI" id="CHEBI:16335"/>
        <dbReference type="ChEBI" id="CHEBI:16708"/>
        <dbReference type="ChEBI" id="CHEBI:43474"/>
        <dbReference type="ChEBI" id="CHEBI:57720"/>
        <dbReference type="EC" id="2.4.2.1"/>
    </reaction>
    <physiologicalReaction direction="left-to-right" evidence="2">
        <dbReference type="Rhea" id="RHEA:27643"/>
    </physiologicalReaction>
</comment>
<comment type="catalytic activity">
    <reaction evidence="2">
        <text>S-methyl-5'-thioadenosine + phosphate = 5-(methylsulfanyl)-alpha-D-ribose 1-phosphate + adenine</text>
        <dbReference type="Rhea" id="RHEA:11852"/>
        <dbReference type="ChEBI" id="CHEBI:16708"/>
        <dbReference type="ChEBI" id="CHEBI:17509"/>
        <dbReference type="ChEBI" id="CHEBI:43474"/>
        <dbReference type="ChEBI" id="CHEBI:58533"/>
        <dbReference type="EC" id="2.4.2.28"/>
    </reaction>
    <physiologicalReaction direction="left-to-right" evidence="2">
        <dbReference type="Rhea" id="RHEA:11853"/>
    </physiologicalReaction>
</comment>
<comment type="catalytic activity">
    <reaction evidence="2">
        <text>inosine + phosphate = alpha-D-ribose 1-phosphate + hypoxanthine</text>
        <dbReference type="Rhea" id="RHEA:27646"/>
        <dbReference type="ChEBI" id="CHEBI:17368"/>
        <dbReference type="ChEBI" id="CHEBI:17596"/>
        <dbReference type="ChEBI" id="CHEBI:43474"/>
        <dbReference type="ChEBI" id="CHEBI:57720"/>
        <dbReference type="EC" id="2.4.2.1"/>
    </reaction>
    <physiologicalReaction direction="left-to-right" evidence="2">
        <dbReference type="Rhea" id="RHEA:27647"/>
    </physiologicalReaction>
</comment>
<comment type="catalytic activity">
    <reaction evidence="2">
        <text>adenosine + H2O + H(+) = inosine + NH4(+)</text>
        <dbReference type="Rhea" id="RHEA:24408"/>
        <dbReference type="ChEBI" id="CHEBI:15377"/>
        <dbReference type="ChEBI" id="CHEBI:15378"/>
        <dbReference type="ChEBI" id="CHEBI:16335"/>
        <dbReference type="ChEBI" id="CHEBI:17596"/>
        <dbReference type="ChEBI" id="CHEBI:28938"/>
        <dbReference type="EC" id="3.5.4.4"/>
    </reaction>
    <physiologicalReaction direction="left-to-right" evidence="2">
        <dbReference type="Rhea" id="RHEA:24409"/>
    </physiologicalReaction>
</comment>
<comment type="cofactor">
    <cofactor evidence="1">
        <name>Cu(2+)</name>
        <dbReference type="ChEBI" id="CHEBI:29036"/>
    </cofactor>
    <cofactor evidence="2">
        <name>Zn(2+)</name>
        <dbReference type="ChEBI" id="CHEBI:29105"/>
    </cofactor>
</comment>
<comment type="subunit">
    <text evidence="3">Homodimer.</text>
</comment>
<comment type="similarity">
    <text evidence="4">Belongs to the purine nucleoside phosphorylase YfiH/LACC1 family.</text>
</comment>
<gene>
    <name type="ordered locus">SE_0862</name>
</gene>
<dbReference type="EC" id="2.4.2.1" evidence="2"/>
<dbReference type="EC" id="3.5.4.4" evidence="2"/>
<dbReference type="EC" id="2.4.2.28" evidence="2"/>
<dbReference type="EMBL" id="AE015929">
    <property type="protein sequence ID" value="AAO04459.1"/>
    <property type="molecule type" value="Genomic_DNA"/>
</dbReference>
<dbReference type="RefSeq" id="NP_764417.1">
    <property type="nucleotide sequence ID" value="NC_004461.1"/>
</dbReference>
<dbReference type="SMR" id="Q8CSX5"/>
<dbReference type="KEGG" id="sep:SE_0862"/>
<dbReference type="PATRIC" id="fig|176280.10.peg.835"/>
<dbReference type="eggNOG" id="COG1496">
    <property type="taxonomic scope" value="Bacteria"/>
</dbReference>
<dbReference type="HOGENOM" id="CLU_065784_0_1_9"/>
<dbReference type="OrthoDB" id="4279at2"/>
<dbReference type="Proteomes" id="UP000001411">
    <property type="component" value="Chromosome"/>
</dbReference>
<dbReference type="GO" id="GO:0004000">
    <property type="term" value="F:adenosine deaminase activity"/>
    <property type="evidence" value="ECO:0007669"/>
    <property type="project" value="RHEA"/>
</dbReference>
<dbReference type="GO" id="GO:0005507">
    <property type="term" value="F:copper ion binding"/>
    <property type="evidence" value="ECO:0007669"/>
    <property type="project" value="TreeGrafter"/>
</dbReference>
<dbReference type="GO" id="GO:0016491">
    <property type="term" value="F:oxidoreductase activity"/>
    <property type="evidence" value="ECO:0007669"/>
    <property type="project" value="UniProtKB-KW"/>
</dbReference>
<dbReference type="GO" id="GO:0017061">
    <property type="term" value="F:S-methyl-5-thioadenosine phosphorylase activity"/>
    <property type="evidence" value="ECO:0007669"/>
    <property type="project" value="UniProtKB-EC"/>
</dbReference>
<dbReference type="CDD" id="cd16833">
    <property type="entry name" value="YfiH"/>
    <property type="match status" value="1"/>
</dbReference>
<dbReference type="Gene3D" id="3.60.140.10">
    <property type="entry name" value="CNF1/YfiH-like putative cysteine hydrolases"/>
    <property type="match status" value="1"/>
</dbReference>
<dbReference type="InterPro" id="IPR003730">
    <property type="entry name" value="Cu_polyphenol_OxRdtase"/>
</dbReference>
<dbReference type="InterPro" id="IPR038371">
    <property type="entry name" value="Cu_polyphenol_OxRdtase_sf"/>
</dbReference>
<dbReference type="InterPro" id="IPR011324">
    <property type="entry name" value="Cytotoxic_necrot_fac-like_cat"/>
</dbReference>
<dbReference type="NCBIfam" id="TIGR00726">
    <property type="entry name" value="peptidoglycan editing factor PgeF"/>
    <property type="match status" value="1"/>
</dbReference>
<dbReference type="PANTHER" id="PTHR30616:SF2">
    <property type="entry name" value="PURINE NUCLEOSIDE PHOSPHORYLASE LACC1"/>
    <property type="match status" value="1"/>
</dbReference>
<dbReference type="PANTHER" id="PTHR30616">
    <property type="entry name" value="UNCHARACTERIZED PROTEIN YFIH"/>
    <property type="match status" value="1"/>
</dbReference>
<dbReference type="Pfam" id="PF02578">
    <property type="entry name" value="Cu-oxidase_4"/>
    <property type="match status" value="1"/>
</dbReference>
<dbReference type="SUPFAM" id="SSF64438">
    <property type="entry name" value="CNF1/YfiH-like putative cysteine hydrolases"/>
    <property type="match status" value="1"/>
</dbReference>
<sequence>MKERFIKKTHYLDYQFDEPTDIKLGFTTRENGLSPYPNHSFNMARYISDSAHHITHHQDILANLIGYPRDEWVFPIQTHDSRIVEVTSEHKGTNIDELTDDLHGIDGMYTFDSHILLTMCYADCVPVYFYSEPHGYIGLAHAGWRGTYGQIVKEMLKKVDFDYEDLKIVIGPATSNSYEINDDIKNKFEELTIDSTLYIETRGKNQHGIDLKKANALLLEEAGVPSKNIYVTEYATSENLDLFFSYRVEKGQTGRMLAFIGRK</sequence>
<proteinExistence type="inferred from homology"/>
<organism>
    <name type="scientific">Staphylococcus epidermidis (strain ATCC 12228 / FDA PCI 1200)</name>
    <dbReference type="NCBI Taxonomy" id="176280"/>
    <lineage>
        <taxon>Bacteria</taxon>
        <taxon>Bacillati</taxon>
        <taxon>Bacillota</taxon>
        <taxon>Bacilli</taxon>
        <taxon>Bacillales</taxon>
        <taxon>Staphylococcaceae</taxon>
        <taxon>Staphylococcus</taxon>
    </lineage>
</organism>
<feature type="chain" id="PRO_0000163178" description="Purine nucleoside phosphorylase SE_0862">
    <location>
        <begin position="1"/>
        <end position="263"/>
    </location>
</feature>
<feature type="binding site" evidence="2">
    <location>
        <position position="79"/>
    </location>
    <ligand>
        <name>Zn(2+)</name>
        <dbReference type="ChEBI" id="CHEBI:29105"/>
        <note>catalytic</note>
    </ligand>
</feature>
<feature type="binding site" evidence="2">
    <location>
        <position position="124"/>
    </location>
    <ligand>
        <name>Zn(2+)</name>
        <dbReference type="ChEBI" id="CHEBI:29105"/>
        <note>catalytic</note>
    </ligand>
</feature>
<feature type="binding site" evidence="2">
    <location>
        <position position="141"/>
    </location>
    <ligand>
        <name>Zn(2+)</name>
        <dbReference type="ChEBI" id="CHEBI:29105"/>
        <note>catalytic</note>
    </ligand>
</feature>
<accession>Q8CSX5</accession>
<evidence type="ECO:0000250" key="1">
    <source>
        <dbReference type="UniProtKB" id="P33644"/>
    </source>
</evidence>
<evidence type="ECO:0000250" key="2">
    <source>
        <dbReference type="UniProtKB" id="P84138"/>
    </source>
</evidence>
<evidence type="ECO:0000250" key="3">
    <source>
        <dbReference type="UniProtKB" id="Q1EIR0"/>
    </source>
</evidence>
<evidence type="ECO:0000305" key="4"/>